<sequence length="713" mass="82119">MAEELITPVYCTGVSAQVQKQRDKELGLGRHENAIKYLGQDYENLRARCLQNGVLFQDDAFPPVSHSLGFKELGPNSSKTYGIKWKRPTELLSNPQFIVDGATRTDICQGALGDCWLLAAIASLTLNETILHRVVPYGQSFQEGYAGIFHFQLWQFGEWVDVVVDDLLPTKDGKLVFVHSAQGNEFWSALLEKAYAKVNGSYEALSGGCTSEAFEDFTGGVTEWYDLQKAPSDLYQIILKALERGSLLGCSINISDIRDLEAITFKNLVRGHAYSVTDAKQVTYQGQRVNLIRMRNPWGEVEWKGPWSDNSYEWNKVDPYEREQLRVKMEDGEFWMSFRDFIREFTKLEICNLTPDALKSRTLRNWNTTFYEGTWRRGSTAGGCRNYPATFWVNPQFKIRLEEVDDADDYDSRESGCSFLLALMQKHRRRERRFGRDMETIGFAVYQVPRELAGQPVHLKRDFFLANASRAQSEHFINLREVSNRIRLPPGEYIVVPSTFEPNKEGDFLLRFFSEKKAGTQELDDQIQANLPDEKVLSEEEIDDNFKTLFSKLAGDDMEISVKELQTILNRIISKHKDLRTNGFSLESCRSMVNLMDRDGNGKLGLVEFNILWNRIRNYLTIFRKFDLDKSGSMSAYEMRMAIEAAGFKLNKKLHELIITRYSEPDLAVDFDNFVCCLVRLETMFRFFKILDTDLDGVVTFDLFKWLQLTMFA</sequence>
<proteinExistence type="evidence at protein level"/>
<accession>P97571</accession>
<organism>
    <name type="scientific">Rattus norvegicus</name>
    <name type="common">Rat</name>
    <dbReference type="NCBI Taxonomy" id="10116"/>
    <lineage>
        <taxon>Eukaryota</taxon>
        <taxon>Metazoa</taxon>
        <taxon>Chordata</taxon>
        <taxon>Craniata</taxon>
        <taxon>Vertebrata</taxon>
        <taxon>Euteleostomi</taxon>
        <taxon>Mammalia</taxon>
        <taxon>Eutheria</taxon>
        <taxon>Euarchontoglires</taxon>
        <taxon>Glires</taxon>
        <taxon>Rodentia</taxon>
        <taxon>Myomorpha</taxon>
        <taxon>Muroidea</taxon>
        <taxon>Muridae</taxon>
        <taxon>Murinae</taxon>
        <taxon>Rattus</taxon>
    </lineage>
</organism>
<gene>
    <name evidence="7" type="primary">Capn1</name>
    <name evidence="2" type="synonym">Cls1</name>
</gene>
<evidence type="ECO:0000250" key="1"/>
<evidence type="ECO:0000250" key="2">
    <source>
        <dbReference type="UniProtKB" id="P07384"/>
    </source>
</evidence>
<evidence type="ECO:0000255" key="3">
    <source>
        <dbReference type="PROSITE-ProRule" id="PRU00239"/>
    </source>
</evidence>
<evidence type="ECO:0000255" key="4">
    <source>
        <dbReference type="PROSITE-ProRule" id="PRU00448"/>
    </source>
</evidence>
<evidence type="ECO:0000269" key="5">
    <source>
    </source>
</evidence>
<evidence type="ECO:0000305" key="6"/>
<evidence type="ECO:0000312" key="7">
    <source>
        <dbReference type="RGD" id="2267"/>
    </source>
</evidence>
<evidence type="ECO:0007829" key="8">
    <source>
        <dbReference type="PDB" id="1KXR"/>
    </source>
</evidence>
<evidence type="ECO:0007829" key="9">
    <source>
        <dbReference type="PDB" id="1QXP"/>
    </source>
</evidence>
<evidence type="ECO:0007829" key="10">
    <source>
        <dbReference type="PDB" id="1TL9"/>
    </source>
</evidence>
<evidence type="ECO:0007829" key="11">
    <source>
        <dbReference type="PDB" id="2G8E"/>
    </source>
</evidence>
<evidence type="ECO:0007829" key="12">
    <source>
        <dbReference type="PDB" id="2G8J"/>
    </source>
</evidence>
<evidence type="ECO:0007829" key="13">
    <source>
        <dbReference type="PDB" id="2R9F"/>
    </source>
</evidence>
<name>CAN1_RAT</name>
<protein>
    <recommendedName>
        <fullName evidence="6">Calpain-1 catalytic subunit</fullName>
        <ecNumber evidence="2">3.4.22.52</ecNumber>
    </recommendedName>
    <alternativeName>
        <fullName>Calcium-activated neutral proteinase 1</fullName>
        <shortName evidence="2">CANP 1</shortName>
    </alternativeName>
    <alternativeName>
        <fullName evidence="2">Calpain mu-type</fullName>
    </alternativeName>
    <alternativeName>
        <fullName evidence="2">Calpain-1 large subunit</fullName>
    </alternativeName>
    <alternativeName>
        <fullName>Micromolar-calpain</fullName>
        <shortName evidence="2">muCANP</shortName>
    </alternativeName>
</protein>
<feature type="chain" id="PRO_0000207700" description="Calpain-1 catalytic subunit">
    <location>
        <begin position="1"/>
        <end position="713"/>
    </location>
</feature>
<feature type="domain" description="Calpain catalytic" evidence="3">
    <location>
        <begin position="55"/>
        <end position="354"/>
    </location>
</feature>
<feature type="domain" description="EF-hand 1" evidence="4">
    <location>
        <begin position="557"/>
        <end position="575"/>
    </location>
</feature>
<feature type="domain" description="EF-hand 2" evidence="4">
    <location>
        <begin position="584"/>
        <end position="609"/>
    </location>
</feature>
<feature type="domain" description="EF-hand 3" evidence="4">
    <location>
        <begin position="614"/>
        <end position="649"/>
    </location>
</feature>
<feature type="domain" description="EF-hand 4" evidence="4">
    <location>
        <begin position="679"/>
        <end position="713"/>
    </location>
</feature>
<feature type="region of interest" description="Domain III">
    <location>
        <begin position="355"/>
        <end position="525"/>
    </location>
</feature>
<feature type="region of interest" description="Linker">
    <location>
        <begin position="526"/>
        <end position="541"/>
    </location>
</feature>
<feature type="region of interest" description="Domain IV">
    <location>
        <begin position="542"/>
        <end position="712"/>
    </location>
</feature>
<feature type="active site" evidence="1">
    <location>
        <position position="115"/>
    </location>
</feature>
<feature type="active site" evidence="1">
    <location>
        <position position="272"/>
    </location>
</feature>
<feature type="active site" evidence="1">
    <location>
        <position position="296"/>
    </location>
</feature>
<feature type="binding site" evidence="4">
    <location>
        <position position="597"/>
    </location>
    <ligand>
        <name>Ca(2+)</name>
        <dbReference type="ChEBI" id="CHEBI:29108"/>
        <label>1</label>
    </ligand>
</feature>
<feature type="binding site" evidence="4">
    <location>
        <position position="599"/>
    </location>
    <ligand>
        <name>Ca(2+)</name>
        <dbReference type="ChEBI" id="CHEBI:29108"/>
        <label>1</label>
    </ligand>
</feature>
<feature type="binding site" evidence="4">
    <location>
        <position position="601"/>
    </location>
    <ligand>
        <name>Ca(2+)</name>
        <dbReference type="ChEBI" id="CHEBI:29108"/>
        <label>1</label>
    </ligand>
</feature>
<feature type="binding site" evidence="4">
    <location>
        <position position="603"/>
    </location>
    <ligand>
        <name>Ca(2+)</name>
        <dbReference type="ChEBI" id="CHEBI:29108"/>
        <label>1</label>
    </ligand>
</feature>
<feature type="binding site" evidence="4">
    <location>
        <position position="608"/>
    </location>
    <ligand>
        <name>Ca(2+)</name>
        <dbReference type="ChEBI" id="CHEBI:29108"/>
        <label>1</label>
    </ligand>
</feature>
<feature type="binding site" evidence="4">
    <location>
        <position position="627"/>
    </location>
    <ligand>
        <name>Ca(2+)</name>
        <dbReference type="ChEBI" id="CHEBI:29108"/>
        <label>2</label>
    </ligand>
</feature>
<feature type="binding site" evidence="4">
    <location>
        <position position="629"/>
    </location>
    <ligand>
        <name>Ca(2+)</name>
        <dbReference type="ChEBI" id="CHEBI:29108"/>
        <label>2</label>
    </ligand>
</feature>
<feature type="binding site" evidence="4">
    <location>
        <position position="631"/>
    </location>
    <ligand>
        <name>Ca(2+)</name>
        <dbReference type="ChEBI" id="CHEBI:29108"/>
        <label>2</label>
    </ligand>
</feature>
<feature type="binding site" evidence="4">
    <location>
        <position position="633"/>
    </location>
    <ligand>
        <name>Ca(2+)</name>
        <dbReference type="ChEBI" id="CHEBI:29108"/>
        <label>2</label>
    </ligand>
</feature>
<feature type="binding site" evidence="4">
    <location>
        <position position="638"/>
    </location>
    <ligand>
        <name>Ca(2+)</name>
        <dbReference type="ChEBI" id="CHEBI:29108"/>
        <label>2</label>
    </ligand>
</feature>
<feature type="site" description="Cleavage; for 78 kDa form" evidence="1">
    <location>
        <begin position="15"/>
        <end position="16"/>
    </location>
</feature>
<feature type="site" description="Cleavage; for 75 kDa form" evidence="1">
    <location>
        <begin position="27"/>
        <end position="28"/>
    </location>
</feature>
<feature type="modified residue" description="Phosphothreonine" evidence="2">
    <location>
        <position position="354"/>
    </location>
</feature>
<feature type="helix" evidence="13">
    <location>
        <begin position="37"/>
        <end position="39"/>
    </location>
</feature>
<feature type="helix" evidence="13">
    <location>
        <begin position="42"/>
        <end position="51"/>
    </location>
</feature>
<feature type="helix" evidence="13">
    <location>
        <begin position="65"/>
        <end position="68"/>
    </location>
</feature>
<feature type="strand" evidence="9">
    <location>
        <begin position="70"/>
        <end position="76"/>
    </location>
</feature>
<feature type="helix" evidence="13">
    <location>
        <begin position="78"/>
        <end position="82"/>
    </location>
</feature>
<feature type="strand" evidence="13">
    <location>
        <begin position="84"/>
        <end position="86"/>
    </location>
</feature>
<feature type="helix" evidence="13">
    <location>
        <begin position="88"/>
        <end position="91"/>
    </location>
</feature>
<feature type="strand" evidence="12">
    <location>
        <begin position="99"/>
        <end position="102"/>
    </location>
</feature>
<feature type="helix" evidence="13">
    <location>
        <begin position="104"/>
        <end position="106"/>
    </location>
</feature>
<feature type="strand" evidence="13">
    <location>
        <begin position="111"/>
        <end position="113"/>
    </location>
</feature>
<feature type="helix" evidence="13">
    <location>
        <begin position="115"/>
        <end position="124"/>
    </location>
</feature>
<feature type="helix" evidence="13">
    <location>
        <begin position="128"/>
        <end position="134"/>
    </location>
</feature>
<feature type="strand" evidence="13">
    <location>
        <begin position="147"/>
        <end position="155"/>
    </location>
</feature>
<feature type="strand" evidence="13">
    <location>
        <begin position="158"/>
        <end position="166"/>
    </location>
</feature>
<feature type="strand" evidence="13">
    <location>
        <begin position="168"/>
        <end position="171"/>
    </location>
</feature>
<feature type="strand" evidence="13">
    <location>
        <begin position="174"/>
        <end position="177"/>
    </location>
</feature>
<feature type="strand" evidence="9">
    <location>
        <begin position="181"/>
        <end position="183"/>
    </location>
</feature>
<feature type="helix" evidence="13">
    <location>
        <begin position="187"/>
        <end position="199"/>
    </location>
</feature>
<feature type="strand" evidence="10">
    <location>
        <begin position="200"/>
        <end position="202"/>
    </location>
</feature>
<feature type="helix" evidence="13">
    <location>
        <begin position="203"/>
        <end position="205"/>
    </location>
</feature>
<feature type="strand" evidence="10">
    <location>
        <begin position="206"/>
        <end position="208"/>
    </location>
</feature>
<feature type="helix" evidence="13">
    <location>
        <begin position="210"/>
        <end position="216"/>
    </location>
</feature>
<feature type="strand" evidence="13">
    <location>
        <begin position="221"/>
        <end position="226"/>
    </location>
</feature>
<feature type="helix" evidence="13">
    <location>
        <begin position="227"/>
        <end position="229"/>
    </location>
</feature>
<feature type="helix" evidence="13">
    <location>
        <begin position="234"/>
        <end position="244"/>
    </location>
</feature>
<feature type="strand" evidence="13">
    <location>
        <begin position="247"/>
        <end position="251"/>
    </location>
</feature>
<feature type="strand" evidence="13">
    <location>
        <begin position="255"/>
        <end position="258"/>
    </location>
</feature>
<feature type="strand" evidence="8">
    <location>
        <begin position="261"/>
        <end position="263"/>
    </location>
</feature>
<feature type="strand" evidence="11">
    <location>
        <begin position="269"/>
        <end position="271"/>
    </location>
</feature>
<feature type="strand" evidence="13">
    <location>
        <begin position="274"/>
        <end position="284"/>
    </location>
</feature>
<feature type="strand" evidence="13">
    <location>
        <begin position="287"/>
        <end position="295"/>
    </location>
</feature>
<feature type="helix" evidence="13">
    <location>
        <begin position="312"/>
        <end position="316"/>
    </location>
</feature>
<feature type="helix" evidence="13">
    <location>
        <begin position="319"/>
        <end position="325"/>
    </location>
</feature>
<feature type="strand" evidence="13">
    <location>
        <begin position="331"/>
        <end position="337"/>
    </location>
</feature>
<feature type="helix" evidence="13">
    <location>
        <begin position="338"/>
        <end position="344"/>
    </location>
</feature>
<feature type="strand" evidence="13">
    <location>
        <begin position="347"/>
        <end position="352"/>
    </location>
</feature>
<feature type="strand" evidence="9">
    <location>
        <begin position="370"/>
        <end position="375"/>
    </location>
</feature>
<feature type="turn" evidence="9">
    <location>
        <begin position="377"/>
        <end position="379"/>
    </location>
</feature>
<feature type="turn" evidence="9">
    <location>
        <begin position="388"/>
        <end position="390"/>
    </location>
</feature>
<feature type="helix" evidence="9">
    <location>
        <begin position="391"/>
        <end position="393"/>
    </location>
</feature>
<feature type="strand" evidence="9">
    <location>
        <begin position="398"/>
        <end position="401"/>
    </location>
</feature>
<feature type="strand" evidence="9">
    <location>
        <begin position="418"/>
        <end position="425"/>
    </location>
</feature>
<feature type="strand" evidence="9">
    <location>
        <begin position="441"/>
        <end position="447"/>
    </location>
</feature>
<feature type="helix" evidence="9">
    <location>
        <begin position="461"/>
        <end position="464"/>
    </location>
</feature>
<feature type="strand" evidence="9">
    <location>
        <begin position="477"/>
        <end position="480"/>
    </location>
</feature>
<feature type="strand" evidence="9">
    <location>
        <begin position="482"/>
        <end position="487"/>
    </location>
</feature>
<feature type="strand" evidence="9">
    <location>
        <begin position="490"/>
        <end position="503"/>
    </location>
</feature>
<feature type="strand" evidence="9">
    <location>
        <begin position="506"/>
        <end position="516"/>
    </location>
</feature>
<feature type="strand" evidence="9">
    <location>
        <begin position="518"/>
        <end position="520"/>
    </location>
</feature>
<feature type="strand" evidence="9">
    <location>
        <begin position="528"/>
        <end position="530"/>
    </location>
</feature>
<feature type="strand" evidence="9">
    <location>
        <begin position="556"/>
        <end position="559"/>
    </location>
</feature>
<feature type="turn" evidence="9">
    <location>
        <begin position="565"/>
        <end position="569"/>
    </location>
</feature>
<feature type="helix" evidence="9">
    <location>
        <begin position="586"/>
        <end position="596"/>
    </location>
</feature>
<feature type="strand" evidence="9">
    <location>
        <begin position="606"/>
        <end position="608"/>
    </location>
</feature>
<feature type="helix" evidence="9">
    <location>
        <begin position="609"/>
        <end position="623"/>
    </location>
</feature>
<feature type="helix" evidence="9">
    <location>
        <begin position="624"/>
        <end position="626"/>
    </location>
</feature>
<feature type="helix" evidence="9">
    <location>
        <begin position="636"/>
        <end position="645"/>
    </location>
</feature>
<keyword id="KW-0002">3D-structure</keyword>
<keyword id="KW-0068">Autocatalytic cleavage</keyword>
<keyword id="KW-0106">Calcium</keyword>
<keyword id="KW-1003">Cell membrane</keyword>
<keyword id="KW-0963">Cytoplasm</keyword>
<keyword id="KW-0378">Hydrolase</keyword>
<keyword id="KW-0472">Membrane</keyword>
<keyword id="KW-0479">Metal-binding</keyword>
<keyword id="KW-0597">Phosphoprotein</keyword>
<keyword id="KW-0645">Protease</keyword>
<keyword id="KW-1185">Reference proteome</keyword>
<keyword id="KW-0677">Repeat</keyword>
<keyword id="KW-0788">Thiol protease</keyword>
<dbReference type="EC" id="3.4.22.52" evidence="2"/>
<dbReference type="EMBL" id="U53858">
    <property type="protein sequence ID" value="AAC53001.1"/>
    <property type="molecule type" value="mRNA"/>
</dbReference>
<dbReference type="EMBL" id="BC061880">
    <property type="protein sequence ID" value="AAH61880.1"/>
    <property type="molecule type" value="mRNA"/>
</dbReference>
<dbReference type="RefSeq" id="NP_062025.1">
    <property type="nucleotide sequence ID" value="NM_019152.2"/>
</dbReference>
<dbReference type="PDB" id="1KXR">
    <property type="method" value="X-ray"/>
    <property type="resolution" value="2.07 A"/>
    <property type="chains" value="A/B=27-356"/>
</dbReference>
<dbReference type="PDB" id="1QXP">
    <property type="method" value="X-ray"/>
    <property type="resolution" value="2.80 A"/>
    <property type="chains" value="A/B=60-647"/>
</dbReference>
<dbReference type="PDB" id="1TL9">
    <property type="method" value="X-ray"/>
    <property type="resolution" value="1.80 A"/>
    <property type="chains" value="A=27-356"/>
</dbReference>
<dbReference type="PDB" id="1TLO">
    <property type="method" value="X-ray"/>
    <property type="resolution" value="1.90 A"/>
    <property type="chains" value="A=27-356"/>
</dbReference>
<dbReference type="PDB" id="2G8E">
    <property type="method" value="X-ray"/>
    <property type="resolution" value="2.25 A"/>
    <property type="chains" value="A=27-356"/>
</dbReference>
<dbReference type="PDB" id="2G8J">
    <property type="method" value="X-ray"/>
    <property type="resolution" value="1.61 A"/>
    <property type="chains" value="A=27-356"/>
</dbReference>
<dbReference type="PDB" id="2NQG">
    <property type="method" value="X-ray"/>
    <property type="resolution" value="2.04 A"/>
    <property type="chains" value="A=27-356"/>
</dbReference>
<dbReference type="PDB" id="2NQI">
    <property type="method" value="X-ray"/>
    <property type="resolution" value="2.04 A"/>
    <property type="chains" value="A=27-356"/>
</dbReference>
<dbReference type="PDB" id="2R9C">
    <property type="method" value="X-ray"/>
    <property type="resolution" value="1.80 A"/>
    <property type="chains" value="A=27-356"/>
</dbReference>
<dbReference type="PDB" id="2R9F">
    <property type="method" value="X-ray"/>
    <property type="resolution" value="1.60 A"/>
    <property type="chains" value="A=27-356"/>
</dbReference>
<dbReference type="PDBsum" id="1KXR"/>
<dbReference type="PDBsum" id="1QXP"/>
<dbReference type="PDBsum" id="1TL9"/>
<dbReference type="PDBsum" id="1TLO"/>
<dbReference type="PDBsum" id="2G8E"/>
<dbReference type="PDBsum" id="2G8J"/>
<dbReference type="PDBsum" id="2NQG"/>
<dbReference type="PDBsum" id="2NQI"/>
<dbReference type="PDBsum" id="2R9C"/>
<dbReference type="PDBsum" id="2R9F"/>
<dbReference type="SMR" id="P97571"/>
<dbReference type="BioGRID" id="247836">
    <property type="interactions" value="3"/>
</dbReference>
<dbReference type="FunCoup" id="P97571">
    <property type="interactions" value="1432"/>
</dbReference>
<dbReference type="IntAct" id="P97571">
    <property type="interactions" value="1"/>
</dbReference>
<dbReference type="STRING" id="10116.ENSRNOP00000028431"/>
<dbReference type="BindingDB" id="P97571"/>
<dbReference type="ChEMBL" id="CHEMBL3747"/>
<dbReference type="MEROPS" id="C02.001"/>
<dbReference type="iPTMnet" id="P97571"/>
<dbReference type="PhosphoSitePlus" id="P97571"/>
<dbReference type="jPOST" id="P97571"/>
<dbReference type="PaxDb" id="10116-ENSRNOP00000028431"/>
<dbReference type="GeneID" id="29153"/>
<dbReference type="KEGG" id="rno:29153"/>
<dbReference type="UCSC" id="RGD:2267">
    <property type="organism name" value="rat"/>
</dbReference>
<dbReference type="AGR" id="RGD:2267"/>
<dbReference type="CTD" id="823"/>
<dbReference type="RGD" id="2267">
    <property type="gene designation" value="Capn1"/>
</dbReference>
<dbReference type="eggNOG" id="KOG0045">
    <property type="taxonomic scope" value="Eukaryota"/>
</dbReference>
<dbReference type="InParanoid" id="P97571"/>
<dbReference type="OrthoDB" id="4764at9989"/>
<dbReference type="PhylomeDB" id="P97571"/>
<dbReference type="BRENDA" id="3.4.22.52">
    <property type="organism ID" value="5301"/>
</dbReference>
<dbReference type="Reactome" id="R-RNO-1474228">
    <property type="pathway name" value="Degradation of the extracellular matrix"/>
</dbReference>
<dbReference type="Reactome" id="R-RNO-6798695">
    <property type="pathway name" value="Neutrophil degranulation"/>
</dbReference>
<dbReference type="EvolutionaryTrace" id="P97571"/>
<dbReference type="PRO" id="PR:P97571"/>
<dbReference type="Proteomes" id="UP000002494">
    <property type="component" value="Unplaced"/>
</dbReference>
<dbReference type="GO" id="GO:0001533">
    <property type="term" value="C:cornified envelope"/>
    <property type="evidence" value="ECO:0000266"/>
    <property type="project" value="RGD"/>
</dbReference>
<dbReference type="GO" id="GO:0005737">
    <property type="term" value="C:cytoplasm"/>
    <property type="evidence" value="ECO:0000266"/>
    <property type="project" value="RGD"/>
</dbReference>
<dbReference type="GO" id="GO:0005829">
    <property type="term" value="C:cytosol"/>
    <property type="evidence" value="ECO:0000250"/>
    <property type="project" value="UniProtKB"/>
</dbReference>
<dbReference type="GO" id="GO:0098978">
    <property type="term" value="C:glutamatergic synapse"/>
    <property type="evidence" value="ECO:0000314"/>
    <property type="project" value="SynGO"/>
</dbReference>
<dbReference type="GO" id="GO:0005764">
    <property type="term" value="C:lysosome"/>
    <property type="evidence" value="ECO:0000266"/>
    <property type="project" value="RGD"/>
</dbReference>
<dbReference type="GO" id="GO:0016020">
    <property type="term" value="C:membrane"/>
    <property type="evidence" value="ECO:0000266"/>
    <property type="project" value="RGD"/>
</dbReference>
<dbReference type="GO" id="GO:0005739">
    <property type="term" value="C:mitochondrion"/>
    <property type="evidence" value="ECO:0000266"/>
    <property type="project" value="RGD"/>
</dbReference>
<dbReference type="GO" id="GO:0005886">
    <property type="term" value="C:plasma membrane"/>
    <property type="evidence" value="ECO:0000250"/>
    <property type="project" value="UniProtKB"/>
</dbReference>
<dbReference type="GO" id="GO:0098794">
    <property type="term" value="C:postsynapse"/>
    <property type="evidence" value="ECO:0000314"/>
    <property type="project" value="SynGO"/>
</dbReference>
<dbReference type="GO" id="GO:0014069">
    <property type="term" value="C:postsynaptic density"/>
    <property type="evidence" value="ECO:0000314"/>
    <property type="project" value="SynGO"/>
</dbReference>
<dbReference type="GO" id="GO:0098793">
    <property type="term" value="C:presynapse"/>
    <property type="evidence" value="ECO:0000314"/>
    <property type="project" value="SynGO"/>
</dbReference>
<dbReference type="GO" id="GO:0005509">
    <property type="term" value="F:calcium ion binding"/>
    <property type="evidence" value="ECO:0000315"/>
    <property type="project" value="RGD"/>
</dbReference>
<dbReference type="GO" id="GO:0004198">
    <property type="term" value="F:calcium-dependent cysteine-type endopeptidase activity"/>
    <property type="evidence" value="ECO:0000314"/>
    <property type="project" value="UniProtKB"/>
</dbReference>
<dbReference type="GO" id="GO:0008092">
    <property type="term" value="F:cytoskeletal protein binding"/>
    <property type="evidence" value="ECO:0000314"/>
    <property type="project" value="RGD"/>
</dbReference>
<dbReference type="GO" id="GO:0019899">
    <property type="term" value="F:enzyme binding"/>
    <property type="evidence" value="ECO:0000353"/>
    <property type="project" value="RGD"/>
</dbReference>
<dbReference type="GO" id="GO:0008233">
    <property type="term" value="F:peptidase activity"/>
    <property type="evidence" value="ECO:0000266"/>
    <property type="project" value="RGD"/>
</dbReference>
<dbReference type="GO" id="GO:0070301">
    <property type="term" value="P:cellular response to hydrogen peroxide"/>
    <property type="evidence" value="ECO:0000315"/>
    <property type="project" value="RGD"/>
</dbReference>
<dbReference type="GO" id="GO:0060056">
    <property type="term" value="P:mammary gland involution"/>
    <property type="evidence" value="ECO:0000266"/>
    <property type="project" value="RGD"/>
</dbReference>
<dbReference type="GO" id="GO:0030837">
    <property type="term" value="P:negative regulation of actin filament polymerization"/>
    <property type="evidence" value="ECO:0000315"/>
    <property type="project" value="RGD"/>
</dbReference>
<dbReference type="GO" id="GO:1901223">
    <property type="term" value="P:negative regulation of non-canonical NF-kappaB signal transduction"/>
    <property type="evidence" value="ECO:0000315"/>
    <property type="project" value="RGD"/>
</dbReference>
<dbReference type="GO" id="GO:0010666">
    <property type="term" value="P:positive regulation of cardiac muscle cell apoptotic process"/>
    <property type="evidence" value="ECO:0000315"/>
    <property type="project" value="RGD"/>
</dbReference>
<dbReference type="GO" id="GO:1903238">
    <property type="term" value="P:positive regulation of leukocyte tethering or rolling"/>
    <property type="evidence" value="ECO:0000315"/>
    <property type="project" value="RGD"/>
</dbReference>
<dbReference type="GO" id="GO:0043117">
    <property type="term" value="P:positive regulation of vascular permeability"/>
    <property type="evidence" value="ECO:0000315"/>
    <property type="project" value="RGD"/>
</dbReference>
<dbReference type="GO" id="GO:0016540">
    <property type="term" value="P:protein autoprocessing"/>
    <property type="evidence" value="ECO:0000314"/>
    <property type="project" value="RGD"/>
</dbReference>
<dbReference type="GO" id="GO:0030163">
    <property type="term" value="P:protein catabolic process"/>
    <property type="evidence" value="ECO:0000314"/>
    <property type="project" value="RGD"/>
</dbReference>
<dbReference type="GO" id="GO:0140249">
    <property type="term" value="P:protein catabolic process at postsynapse"/>
    <property type="evidence" value="ECO:0000314"/>
    <property type="project" value="SynGO"/>
</dbReference>
<dbReference type="GO" id="GO:0006508">
    <property type="term" value="P:proteolysis"/>
    <property type="evidence" value="ECO:0000314"/>
    <property type="project" value="UniProtKB"/>
</dbReference>
<dbReference type="GO" id="GO:0032801">
    <property type="term" value="P:receptor catabolic process"/>
    <property type="evidence" value="ECO:0000266"/>
    <property type="project" value="RGD"/>
</dbReference>
<dbReference type="GO" id="GO:0050790">
    <property type="term" value="P:regulation of catalytic activity"/>
    <property type="evidence" value="ECO:0000250"/>
    <property type="project" value="UniProtKB"/>
</dbReference>
<dbReference type="GO" id="GO:1990776">
    <property type="term" value="P:response to angiotensin"/>
    <property type="evidence" value="ECO:0000315"/>
    <property type="project" value="RGD"/>
</dbReference>
<dbReference type="GO" id="GO:0046685">
    <property type="term" value="P:response to arsenic-containing substance"/>
    <property type="evidence" value="ECO:0000270"/>
    <property type="project" value="RGD"/>
</dbReference>
<dbReference type="GO" id="GO:0097264">
    <property type="term" value="P:self proteolysis"/>
    <property type="evidence" value="ECO:0000250"/>
    <property type="project" value="UniProtKB"/>
</dbReference>
<dbReference type="CDD" id="cd00214">
    <property type="entry name" value="Calpain_III"/>
    <property type="match status" value="1"/>
</dbReference>
<dbReference type="CDD" id="cd00044">
    <property type="entry name" value="CysPc"/>
    <property type="match status" value="1"/>
</dbReference>
<dbReference type="CDD" id="cd16198">
    <property type="entry name" value="EFh_PEF_CAPN1"/>
    <property type="match status" value="1"/>
</dbReference>
<dbReference type="FunFam" id="1.10.238.10:FF:000124">
    <property type="entry name" value="Calpain-1 catalytic subunit"/>
    <property type="match status" value="1"/>
</dbReference>
<dbReference type="FunFam" id="2.60.120.380:FF:000001">
    <property type="entry name" value="Calpain-1 catalytic subunit"/>
    <property type="match status" value="1"/>
</dbReference>
<dbReference type="FunFam" id="3.90.70.10:FF:000001">
    <property type="entry name" value="Calpain-1 catalytic subunit"/>
    <property type="match status" value="1"/>
</dbReference>
<dbReference type="Gene3D" id="2.60.120.380">
    <property type="match status" value="1"/>
</dbReference>
<dbReference type="Gene3D" id="3.90.70.10">
    <property type="entry name" value="Cysteine proteinases"/>
    <property type="match status" value="1"/>
</dbReference>
<dbReference type="Gene3D" id="1.10.238.10">
    <property type="entry name" value="EF-hand"/>
    <property type="match status" value="1"/>
</dbReference>
<dbReference type="InterPro" id="IPR033883">
    <property type="entry name" value="C2_III"/>
</dbReference>
<dbReference type="InterPro" id="IPR022684">
    <property type="entry name" value="Calpain_cysteine_protease"/>
</dbReference>
<dbReference type="InterPro" id="IPR022682">
    <property type="entry name" value="Calpain_domain_III"/>
</dbReference>
<dbReference type="InterPro" id="IPR022683">
    <property type="entry name" value="Calpain_III"/>
</dbReference>
<dbReference type="InterPro" id="IPR036213">
    <property type="entry name" value="Calpain_III_sf"/>
</dbReference>
<dbReference type="InterPro" id="IPR011992">
    <property type="entry name" value="EF-hand-dom_pair"/>
</dbReference>
<dbReference type="InterPro" id="IPR018247">
    <property type="entry name" value="EF_Hand_1_Ca_BS"/>
</dbReference>
<dbReference type="InterPro" id="IPR002048">
    <property type="entry name" value="EF_hand_dom"/>
</dbReference>
<dbReference type="InterPro" id="IPR038765">
    <property type="entry name" value="Papain-like_cys_pep_sf"/>
</dbReference>
<dbReference type="InterPro" id="IPR000169">
    <property type="entry name" value="Pept_cys_AS"/>
</dbReference>
<dbReference type="InterPro" id="IPR001300">
    <property type="entry name" value="Peptidase_C2_calpain_cat"/>
</dbReference>
<dbReference type="PANTHER" id="PTHR10183">
    <property type="entry name" value="CALPAIN"/>
    <property type="match status" value="1"/>
</dbReference>
<dbReference type="PANTHER" id="PTHR10183:SF284">
    <property type="entry name" value="CALPAIN-1 CATALYTIC SUBUNIT"/>
    <property type="match status" value="1"/>
</dbReference>
<dbReference type="Pfam" id="PF01067">
    <property type="entry name" value="Calpain_III"/>
    <property type="match status" value="1"/>
</dbReference>
<dbReference type="Pfam" id="PF13833">
    <property type="entry name" value="EF-hand_8"/>
    <property type="match status" value="1"/>
</dbReference>
<dbReference type="Pfam" id="PF00648">
    <property type="entry name" value="Peptidase_C2"/>
    <property type="match status" value="1"/>
</dbReference>
<dbReference type="PRINTS" id="PR00704">
    <property type="entry name" value="CALPAIN"/>
</dbReference>
<dbReference type="SMART" id="SM00720">
    <property type="entry name" value="calpain_III"/>
    <property type="match status" value="1"/>
</dbReference>
<dbReference type="SMART" id="SM00230">
    <property type="entry name" value="CysPc"/>
    <property type="match status" value="1"/>
</dbReference>
<dbReference type="SUPFAM" id="SSF49758">
    <property type="entry name" value="Calpain large subunit, middle domain (domain III)"/>
    <property type="match status" value="1"/>
</dbReference>
<dbReference type="SUPFAM" id="SSF54001">
    <property type="entry name" value="Cysteine proteinases"/>
    <property type="match status" value="1"/>
</dbReference>
<dbReference type="SUPFAM" id="SSF47473">
    <property type="entry name" value="EF-hand"/>
    <property type="match status" value="1"/>
</dbReference>
<dbReference type="PROSITE" id="PS50203">
    <property type="entry name" value="CALPAIN_CAT"/>
    <property type="match status" value="1"/>
</dbReference>
<dbReference type="PROSITE" id="PS00018">
    <property type="entry name" value="EF_HAND_1"/>
    <property type="match status" value="2"/>
</dbReference>
<dbReference type="PROSITE" id="PS50222">
    <property type="entry name" value="EF_HAND_2"/>
    <property type="match status" value="4"/>
</dbReference>
<dbReference type="PROSITE" id="PS00139">
    <property type="entry name" value="THIOL_PROTEASE_CYS"/>
    <property type="match status" value="1"/>
</dbReference>
<comment type="function">
    <text evidence="2">Calcium-regulated non-lysosomal thiol-protease which catalyzes limited proteolysis of substrates involved in cytoskeletal remodeling and signal transduction. Proteolytically cleaves CTBP1 at 'Asn-364', 'Gly-377' and 'His-399'. Cleaves and activates caspase-7 (CASP7).</text>
</comment>
<comment type="catalytic activity">
    <reaction evidence="2">
        <text>Broad endopeptidase specificity.</text>
        <dbReference type="EC" id="3.4.22.52"/>
    </reaction>
</comment>
<comment type="cofactor">
    <cofactor evidence="2">
        <name>Ca(2+)</name>
        <dbReference type="ChEBI" id="CHEBI:29108"/>
    </cofactor>
    <text evidence="2">Binds 4 Ca(2+) ions.</text>
</comment>
<comment type="activity regulation">
    <text evidence="2">Activated by micromolar concentrations of calcium and inhibited by calpastatin.</text>
</comment>
<comment type="subunit">
    <text evidence="5">Forms a heterodimer with a small (regulatory) subunit CAPNS1.</text>
</comment>
<comment type="subcellular location">
    <subcellularLocation>
        <location evidence="2">Cytoplasm</location>
    </subcellularLocation>
    <subcellularLocation>
        <location evidence="2">Cell membrane</location>
    </subcellularLocation>
    <text evidence="2">Translocates to the plasma membrane upon Ca(2+) binding.</text>
</comment>
<comment type="PTM">
    <text evidence="2">Undergoes calcium-induced successive autoproteolytic cleavages that generate a membrane-bound 78 kDa active form and an intracellular 75 kDa active form. Calpastatin reduces with high efficiency the transition from 78 kDa to 75 kDa calpain forms (By similarity).</text>
</comment>
<comment type="similarity">
    <text evidence="6">Belongs to the peptidase C2 family.</text>
</comment>
<reference key="1">
    <citation type="journal article" date="1996" name="Biochim. Biophys. Acta">
        <title>Primary sequences of rat mu-calpain large and small subunits are, respectively, moderately and highly similar to those of human.</title>
        <authorList>
            <person name="Sorimachi H."/>
            <person name="Amano S."/>
            <person name="Ishiura S."/>
            <person name="Suzuki K."/>
        </authorList>
    </citation>
    <scope>NUCLEOTIDE SEQUENCE [MRNA]</scope>
</reference>
<reference key="2">
    <citation type="journal article" date="2004" name="Genome Res.">
        <title>The status, quality, and expansion of the NIH full-length cDNA project: the Mammalian Gene Collection (MGC).</title>
        <authorList>
            <consortium name="The MGC Project Team"/>
        </authorList>
    </citation>
    <scope>NUCLEOTIDE SEQUENCE [LARGE SCALE MRNA]</scope>
    <source>
        <tissue>Prostate</tissue>
    </source>
</reference>
<reference key="3">
    <citation type="journal article" date="2002" name="Cell">
        <title>A Ca(2+) switch aligns the active site of calpain.</title>
        <authorList>
            <person name="Moldoveanu T."/>
            <person name="Hosfield C.M."/>
            <person name="Lim D."/>
            <person name="Elce J.S."/>
            <person name="Jia Z."/>
            <person name="Davies P.L."/>
        </authorList>
    </citation>
    <scope>X-RAY CRYSTALLOGRAPHY (2.07 ANGSTROMS) OF 27-356</scope>
    <scope>CALCIUM-BINDING REGIONS</scope>
</reference>
<reference key="4">
    <citation type="journal article" date="2003" name="Structure">
        <title>Crystal structure of a micro-like calpain reveals a partially activated conformation with low Ca2+ requirement.</title>
        <authorList>
            <person name="Pal G.P."/>
            <person name="De Veyra T."/>
            <person name="Elce J.S."/>
            <person name="Jia Z."/>
        </authorList>
    </citation>
    <scope>X-RAY CRYSTALLOGRAPHY (2.8 ANGSTROMS) OF 60-647</scope>
</reference>
<reference key="5">
    <citation type="journal article" date="2004" name="J. Mol. Biol.">
        <title>Crystal structures of calpain-E64 and -leupeptin inhibitor complexes reveal mobile loops gating the active site.</title>
        <authorList>
            <person name="Moldoveanu T."/>
            <person name="Campbell R.L."/>
            <person name="Cuerrier D."/>
            <person name="Davies P.L."/>
        </authorList>
    </citation>
    <scope>X-RAY CRYSTALLOGRAPHY (1.8 ANGSTROMS) OF 27-356 IN COMPLEX WITH INHIBITORS</scope>
    <scope>SUBUNIT</scope>
    <scope>CALCIUM-BINDING REGIONS</scope>
</reference>